<accession>B4I195</accession>
<protein>
    <recommendedName>
        <fullName evidence="1">Eukaryotic translation initiation factor 3 subunit I</fullName>
        <shortName evidence="1">eIF3i</shortName>
    </recommendedName>
    <alternativeName>
        <fullName evidence="1">Eukaryotic translation initiation factor 3 subunit 2</fullName>
    </alternativeName>
    <alternativeName>
        <fullName>TRIP-1 homolog</fullName>
    </alternativeName>
</protein>
<feature type="chain" id="PRO_0000365348" description="Eukaryotic translation initiation factor 3 subunit I">
    <location>
        <begin position="1"/>
        <end position="326"/>
    </location>
</feature>
<feature type="repeat" description="WD 1">
    <location>
        <begin position="8"/>
        <end position="47"/>
    </location>
</feature>
<feature type="repeat" description="WD 2">
    <location>
        <begin position="50"/>
        <end position="89"/>
    </location>
</feature>
<feature type="repeat" description="WD 3">
    <location>
        <begin position="145"/>
        <end position="184"/>
    </location>
</feature>
<feature type="repeat" description="WD 4">
    <location>
        <begin position="188"/>
        <end position="227"/>
    </location>
</feature>
<feature type="repeat" description="WD 5">
    <location>
        <begin position="285"/>
        <end position="326"/>
    </location>
</feature>
<organism>
    <name type="scientific">Drosophila sechellia</name>
    <name type="common">Fruit fly</name>
    <dbReference type="NCBI Taxonomy" id="7238"/>
    <lineage>
        <taxon>Eukaryota</taxon>
        <taxon>Metazoa</taxon>
        <taxon>Ecdysozoa</taxon>
        <taxon>Arthropoda</taxon>
        <taxon>Hexapoda</taxon>
        <taxon>Insecta</taxon>
        <taxon>Pterygota</taxon>
        <taxon>Neoptera</taxon>
        <taxon>Endopterygota</taxon>
        <taxon>Diptera</taxon>
        <taxon>Brachycera</taxon>
        <taxon>Muscomorpha</taxon>
        <taxon>Ephydroidea</taxon>
        <taxon>Drosophilidae</taxon>
        <taxon>Drosophila</taxon>
        <taxon>Sophophora</taxon>
    </lineage>
</organism>
<keyword id="KW-0963">Cytoplasm</keyword>
<keyword id="KW-0396">Initiation factor</keyword>
<keyword id="KW-0648">Protein biosynthesis</keyword>
<keyword id="KW-1185">Reference proteome</keyword>
<keyword id="KW-0677">Repeat</keyword>
<keyword id="KW-0853">WD repeat</keyword>
<comment type="function">
    <text evidence="1">Component of the eukaryotic translation initiation factor 3 (eIF-3) complex, which is involved in protein synthesis of a specialized repertoire of mRNAs and, together with other initiation factors, stimulates binding of mRNA and methionyl-tRNAi to the 40S ribosome. The eIF-3 complex specifically targets and initiates translation of a subset of mRNAs involved in cell proliferation.</text>
</comment>
<comment type="subunit">
    <text evidence="1">Component of the eukaryotic translation initiation factor 3 (eIF-3) complex. The eIF-3 complex interacts with pix.</text>
</comment>
<comment type="subcellular location">
    <subcellularLocation>
        <location evidence="1">Cytoplasm</location>
    </subcellularLocation>
</comment>
<comment type="similarity">
    <text evidence="1">Belongs to the eIF-3 subunit I family.</text>
</comment>
<dbReference type="EMBL" id="CH480820">
    <property type="protein sequence ID" value="EDW54302.1"/>
    <property type="molecule type" value="Genomic_DNA"/>
</dbReference>
<dbReference type="SMR" id="B4I195"/>
<dbReference type="STRING" id="7238.B4I195"/>
<dbReference type="EnsemblMetazoa" id="FBtr0201040">
    <property type="protein sequence ID" value="FBpp0199532"/>
    <property type="gene ID" value="FBgn0172962"/>
</dbReference>
<dbReference type="EnsemblMetazoa" id="XM_002037848.2">
    <property type="protein sequence ID" value="XP_002037884.1"/>
    <property type="gene ID" value="LOC6613410"/>
</dbReference>
<dbReference type="GeneID" id="6613410"/>
<dbReference type="KEGG" id="dse:6613410"/>
<dbReference type="CTD" id="8668"/>
<dbReference type="HOGENOM" id="CLU_043845_0_1_1"/>
<dbReference type="OMA" id="VWFSHNG"/>
<dbReference type="OrthoDB" id="2153at7215"/>
<dbReference type="PhylomeDB" id="B4I195"/>
<dbReference type="ChiTaRS" id="Trip1">
    <property type="organism name" value="fly"/>
</dbReference>
<dbReference type="Proteomes" id="UP000001292">
    <property type="component" value="Unassembled WGS sequence"/>
</dbReference>
<dbReference type="GO" id="GO:0016282">
    <property type="term" value="C:eukaryotic 43S preinitiation complex"/>
    <property type="evidence" value="ECO:0007669"/>
    <property type="project" value="UniProtKB-UniRule"/>
</dbReference>
<dbReference type="GO" id="GO:0033290">
    <property type="term" value="C:eukaryotic 48S preinitiation complex"/>
    <property type="evidence" value="ECO:0007669"/>
    <property type="project" value="UniProtKB-UniRule"/>
</dbReference>
<dbReference type="GO" id="GO:0071541">
    <property type="term" value="C:eukaryotic translation initiation factor 3 complex, eIF3m"/>
    <property type="evidence" value="ECO:0007669"/>
    <property type="project" value="TreeGrafter"/>
</dbReference>
<dbReference type="GO" id="GO:0003723">
    <property type="term" value="F:RNA binding"/>
    <property type="evidence" value="ECO:0007669"/>
    <property type="project" value="TreeGrafter"/>
</dbReference>
<dbReference type="GO" id="GO:0003743">
    <property type="term" value="F:translation initiation factor activity"/>
    <property type="evidence" value="ECO:0007669"/>
    <property type="project" value="UniProtKB-UniRule"/>
</dbReference>
<dbReference type="GO" id="GO:0001732">
    <property type="term" value="P:formation of cytoplasmic translation initiation complex"/>
    <property type="evidence" value="ECO:0007669"/>
    <property type="project" value="UniProtKB-UniRule"/>
</dbReference>
<dbReference type="FunFam" id="2.130.10.10:FF:000127">
    <property type="entry name" value="Eukaryotic translation initiation factor 3 subunit I"/>
    <property type="match status" value="1"/>
</dbReference>
<dbReference type="Gene3D" id="2.130.10.10">
    <property type="entry name" value="YVTN repeat-like/Quinoprotein amine dehydrogenase"/>
    <property type="match status" value="1"/>
</dbReference>
<dbReference type="HAMAP" id="MF_03008">
    <property type="entry name" value="eIF3i"/>
    <property type="match status" value="1"/>
</dbReference>
<dbReference type="InterPro" id="IPR027525">
    <property type="entry name" value="eIF3i"/>
</dbReference>
<dbReference type="InterPro" id="IPR015943">
    <property type="entry name" value="WD40/YVTN_repeat-like_dom_sf"/>
</dbReference>
<dbReference type="InterPro" id="IPR019775">
    <property type="entry name" value="WD40_repeat_CS"/>
</dbReference>
<dbReference type="InterPro" id="IPR036322">
    <property type="entry name" value="WD40_repeat_dom_sf"/>
</dbReference>
<dbReference type="InterPro" id="IPR001680">
    <property type="entry name" value="WD40_rpt"/>
</dbReference>
<dbReference type="PANTHER" id="PTHR19877">
    <property type="entry name" value="EUKARYOTIC TRANSLATION INITIATION FACTOR 3 SUBUNIT I"/>
    <property type="match status" value="1"/>
</dbReference>
<dbReference type="PANTHER" id="PTHR19877:SF1">
    <property type="entry name" value="EUKARYOTIC TRANSLATION INITIATION FACTOR 3 SUBUNIT I"/>
    <property type="match status" value="1"/>
</dbReference>
<dbReference type="Pfam" id="PF24805">
    <property type="entry name" value="EIF3I"/>
    <property type="match status" value="1"/>
</dbReference>
<dbReference type="SMART" id="SM00320">
    <property type="entry name" value="WD40"/>
    <property type="match status" value="6"/>
</dbReference>
<dbReference type="SUPFAM" id="SSF50978">
    <property type="entry name" value="WD40 repeat-like"/>
    <property type="match status" value="1"/>
</dbReference>
<dbReference type="PROSITE" id="PS00678">
    <property type="entry name" value="WD_REPEATS_1"/>
    <property type="match status" value="2"/>
</dbReference>
<dbReference type="PROSITE" id="PS50082">
    <property type="entry name" value="WD_REPEATS_2"/>
    <property type="match status" value="5"/>
</dbReference>
<dbReference type="PROSITE" id="PS50294">
    <property type="entry name" value="WD_REPEATS_REGION"/>
    <property type="match status" value="2"/>
</dbReference>
<name>EIF3I_DROSE</name>
<reference key="1">
    <citation type="journal article" date="2007" name="Nature">
        <title>Evolution of genes and genomes on the Drosophila phylogeny.</title>
        <authorList>
            <consortium name="Drosophila 12 genomes consortium"/>
        </authorList>
    </citation>
    <scope>NUCLEOTIDE SEQUENCE [LARGE SCALE GENOMIC DNA]</scope>
    <source>
        <strain>Rob3c / Tucson 14021-0248.25</strain>
    </source>
</reference>
<sequence length="326" mass="36160">MRPLMLQGHERSITQIKYNREGDLLFSCSKDQKPNVWYSLNGERLGTYDGHQGAVWCLDVDWESRKLITGAGDMTAKIWDVEYGTVIASIPTKSSVRTSNFSFSGNQAAYSTDKAMGQSCELFLIDVRNADSSLSEQEPTLRIPMTESKITSMLWGPLDETIITGHDNGNIAIWDIRKGQKVVDSGTDHSAGINDMQLSKDGTMFVTASKDTTAKLFDSESLMCLKTYKTERPVNSAAISPIMDHVVLGGGQDAMEVTTTSTKAGKFDSRFFHLIYEEEFARLKGHFGPINSLAFHPDGKSYASGGEDGFVRVQTFDSTYFENIFE</sequence>
<gene>
    <name evidence="1" type="primary">eIF3i</name>
    <name evidence="1" type="synonym">eif3-S2</name>
    <name evidence="1" type="synonym">Trip1</name>
    <name type="ORF">GM18055</name>
</gene>
<evidence type="ECO:0000255" key="1">
    <source>
        <dbReference type="HAMAP-Rule" id="MF_03008"/>
    </source>
</evidence>
<proteinExistence type="inferred from homology"/>